<sequence>MAADRAQNLQDTFLNHVRKTKTPLTIFLVNGVKLQGIVTWFDNFCLLLRRDGHSQLVYKHAISTIMPGAPIQLFEGGEDASA</sequence>
<protein>
    <recommendedName>
        <fullName evidence="1">RNA-binding protein Hfq</fullName>
    </recommendedName>
</protein>
<evidence type="ECO:0000255" key="1">
    <source>
        <dbReference type="HAMAP-Rule" id="MF_00436"/>
    </source>
</evidence>
<evidence type="ECO:0000255" key="2">
    <source>
        <dbReference type="PROSITE-ProRule" id="PRU01346"/>
    </source>
</evidence>
<proteinExistence type="inferred from homology"/>
<accession>A5EIZ5</accession>
<keyword id="KW-1185">Reference proteome</keyword>
<keyword id="KW-0694">RNA-binding</keyword>
<keyword id="KW-0346">Stress response</keyword>
<gene>
    <name evidence="1" type="primary">hfq</name>
    <name type="ordered locus">BBta_4073</name>
</gene>
<organism>
    <name type="scientific">Bradyrhizobium sp. (strain BTAi1 / ATCC BAA-1182)</name>
    <dbReference type="NCBI Taxonomy" id="288000"/>
    <lineage>
        <taxon>Bacteria</taxon>
        <taxon>Pseudomonadati</taxon>
        <taxon>Pseudomonadota</taxon>
        <taxon>Alphaproteobacteria</taxon>
        <taxon>Hyphomicrobiales</taxon>
        <taxon>Nitrobacteraceae</taxon>
        <taxon>Bradyrhizobium</taxon>
    </lineage>
</organism>
<reference key="1">
    <citation type="journal article" date="2007" name="Science">
        <title>Legumes symbioses: absence of nod genes in photosynthetic bradyrhizobia.</title>
        <authorList>
            <person name="Giraud E."/>
            <person name="Moulin L."/>
            <person name="Vallenet D."/>
            <person name="Barbe V."/>
            <person name="Cytryn E."/>
            <person name="Avarre J.-C."/>
            <person name="Jaubert M."/>
            <person name="Simon D."/>
            <person name="Cartieaux F."/>
            <person name="Prin Y."/>
            <person name="Bena G."/>
            <person name="Hannibal L."/>
            <person name="Fardoux J."/>
            <person name="Kojadinovic M."/>
            <person name="Vuillet L."/>
            <person name="Lajus A."/>
            <person name="Cruveiller S."/>
            <person name="Rouy Z."/>
            <person name="Mangenot S."/>
            <person name="Segurens B."/>
            <person name="Dossat C."/>
            <person name="Franck W.L."/>
            <person name="Chang W.-S."/>
            <person name="Saunders E."/>
            <person name="Bruce D."/>
            <person name="Richardson P."/>
            <person name="Normand P."/>
            <person name="Dreyfus B."/>
            <person name="Pignol D."/>
            <person name="Stacey G."/>
            <person name="Emerich D."/>
            <person name="Vermeglio A."/>
            <person name="Medigue C."/>
            <person name="Sadowsky M."/>
        </authorList>
    </citation>
    <scope>NUCLEOTIDE SEQUENCE [LARGE SCALE GENOMIC DNA]</scope>
    <source>
        <strain>BTAi1 / ATCC BAA-1182</strain>
    </source>
</reference>
<feature type="chain" id="PRO_1000080655" description="RNA-binding protein Hfq">
    <location>
        <begin position="1"/>
        <end position="82"/>
    </location>
</feature>
<feature type="domain" description="Sm" evidence="2">
    <location>
        <begin position="11"/>
        <end position="71"/>
    </location>
</feature>
<comment type="function">
    <text evidence="1">RNA chaperone that binds small regulatory RNA (sRNAs) and mRNAs to facilitate mRNA translational regulation in response to envelope stress, environmental stress and changes in metabolite concentrations. Also binds with high specificity to tRNAs.</text>
</comment>
<comment type="subunit">
    <text evidence="1">Homohexamer.</text>
</comment>
<comment type="similarity">
    <text evidence="1">Belongs to the Hfq family.</text>
</comment>
<name>HFQ_BRASB</name>
<dbReference type="EMBL" id="CP000494">
    <property type="protein sequence ID" value="ABQ36139.1"/>
    <property type="molecule type" value="Genomic_DNA"/>
</dbReference>
<dbReference type="RefSeq" id="WP_006613906.1">
    <property type="nucleotide sequence ID" value="NC_009485.1"/>
</dbReference>
<dbReference type="SMR" id="A5EIZ5"/>
<dbReference type="STRING" id="288000.BBta_4073"/>
<dbReference type="KEGG" id="bbt:BBta_4073"/>
<dbReference type="eggNOG" id="COG1923">
    <property type="taxonomic scope" value="Bacteria"/>
</dbReference>
<dbReference type="HOGENOM" id="CLU_113688_0_0_5"/>
<dbReference type="OrthoDB" id="9799751at2"/>
<dbReference type="Proteomes" id="UP000000246">
    <property type="component" value="Chromosome"/>
</dbReference>
<dbReference type="GO" id="GO:0005829">
    <property type="term" value="C:cytosol"/>
    <property type="evidence" value="ECO:0007669"/>
    <property type="project" value="TreeGrafter"/>
</dbReference>
<dbReference type="GO" id="GO:0003723">
    <property type="term" value="F:RNA binding"/>
    <property type="evidence" value="ECO:0007669"/>
    <property type="project" value="UniProtKB-UniRule"/>
</dbReference>
<dbReference type="GO" id="GO:0006355">
    <property type="term" value="P:regulation of DNA-templated transcription"/>
    <property type="evidence" value="ECO:0007669"/>
    <property type="project" value="InterPro"/>
</dbReference>
<dbReference type="GO" id="GO:0043487">
    <property type="term" value="P:regulation of RNA stability"/>
    <property type="evidence" value="ECO:0007669"/>
    <property type="project" value="TreeGrafter"/>
</dbReference>
<dbReference type="GO" id="GO:0045974">
    <property type="term" value="P:regulation of translation, ncRNA-mediated"/>
    <property type="evidence" value="ECO:0007669"/>
    <property type="project" value="TreeGrafter"/>
</dbReference>
<dbReference type="CDD" id="cd01716">
    <property type="entry name" value="Hfq"/>
    <property type="match status" value="1"/>
</dbReference>
<dbReference type="FunFam" id="2.30.30.100:FF:000001">
    <property type="entry name" value="RNA-binding protein Hfq"/>
    <property type="match status" value="1"/>
</dbReference>
<dbReference type="Gene3D" id="2.30.30.100">
    <property type="match status" value="1"/>
</dbReference>
<dbReference type="HAMAP" id="MF_00436">
    <property type="entry name" value="Hfq"/>
    <property type="match status" value="1"/>
</dbReference>
<dbReference type="InterPro" id="IPR005001">
    <property type="entry name" value="Hfq"/>
</dbReference>
<dbReference type="InterPro" id="IPR010920">
    <property type="entry name" value="LSM_dom_sf"/>
</dbReference>
<dbReference type="InterPro" id="IPR047575">
    <property type="entry name" value="Sm"/>
</dbReference>
<dbReference type="NCBIfam" id="TIGR02383">
    <property type="entry name" value="Hfq"/>
    <property type="match status" value="1"/>
</dbReference>
<dbReference type="NCBIfam" id="NF001602">
    <property type="entry name" value="PRK00395.1"/>
    <property type="match status" value="1"/>
</dbReference>
<dbReference type="PANTHER" id="PTHR34772">
    <property type="entry name" value="RNA-BINDING PROTEIN HFQ"/>
    <property type="match status" value="1"/>
</dbReference>
<dbReference type="PANTHER" id="PTHR34772:SF1">
    <property type="entry name" value="RNA-BINDING PROTEIN HFQ"/>
    <property type="match status" value="1"/>
</dbReference>
<dbReference type="Pfam" id="PF17209">
    <property type="entry name" value="Hfq"/>
    <property type="match status" value="1"/>
</dbReference>
<dbReference type="SUPFAM" id="SSF50182">
    <property type="entry name" value="Sm-like ribonucleoproteins"/>
    <property type="match status" value="1"/>
</dbReference>
<dbReference type="PROSITE" id="PS52002">
    <property type="entry name" value="SM"/>
    <property type="match status" value="1"/>
</dbReference>